<accession>C4ZW41</accession>
<sequence>MISTVALFWALCVVCIVNMARYFSSLRALLVVLRNCDPLLYQYVDGGGFFTSHGQPNKQVRLVWYIYAQRYRDHHDDEFIRRCERVRRQFILTSALCGLVVVSLIALMIWH</sequence>
<reference key="1">
    <citation type="journal article" date="2009" name="J. Bacteriol.">
        <title>Genomic sequencing reveals regulatory mutations and recombinational events in the widely used MC4100 lineage of Escherichia coli K-12.</title>
        <authorList>
            <person name="Ferenci T."/>
            <person name="Zhou Z."/>
            <person name="Betteridge T."/>
            <person name="Ren Y."/>
            <person name="Liu Y."/>
            <person name="Feng L."/>
            <person name="Reeves P.R."/>
            <person name="Wang L."/>
        </authorList>
    </citation>
    <scope>NUCLEOTIDE SEQUENCE [LARGE SCALE GENOMIC DNA]</scope>
    <source>
        <strain>K12 / MC4100 / BW2952</strain>
    </source>
</reference>
<feature type="chain" id="PRO_1000213536" description="Universal stress protein B">
    <location>
        <begin position="1"/>
        <end position="111"/>
    </location>
</feature>
<feature type="transmembrane region" description="Helical" evidence="1">
    <location>
        <begin position="1"/>
        <end position="21"/>
    </location>
</feature>
<feature type="transmembrane region" description="Helical" evidence="1">
    <location>
        <begin position="90"/>
        <end position="110"/>
    </location>
</feature>
<dbReference type="EMBL" id="CP001396">
    <property type="protein sequence ID" value="ACR65255.1"/>
    <property type="molecule type" value="Genomic_DNA"/>
</dbReference>
<dbReference type="RefSeq" id="WP_000626187.1">
    <property type="nucleotide sequence ID" value="NC_012759.1"/>
</dbReference>
<dbReference type="SMR" id="C4ZW41"/>
<dbReference type="GeneID" id="93778499"/>
<dbReference type="KEGG" id="ebw:BWG_3183"/>
<dbReference type="HOGENOM" id="CLU_151816_0_0_6"/>
<dbReference type="GO" id="GO:0005886">
    <property type="term" value="C:plasma membrane"/>
    <property type="evidence" value="ECO:0007669"/>
    <property type="project" value="UniProtKB-SubCell"/>
</dbReference>
<dbReference type="HAMAP" id="MF_01088">
    <property type="entry name" value="UspB"/>
    <property type="match status" value="1"/>
</dbReference>
<dbReference type="InterPro" id="IPR019598">
    <property type="entry name" value="Universal_stress_protein_B"/>
</dbReference>
<dbReference type="NCBIfam" id="NF003435">
    <property type="entry name" value="PRK04960.1"/>
    <property type="match status" value="1"/>
</dbReference>
<dbReference type="Pfam" id="PF10625">
    <property type="entry name" value="UspB"/>
    <property type="match status" value="1"/>
</dbReference>
<organism>
    <name type="scientific">Escherichia coli (strain K12 / MC4100 / BW2952)</name>
    <dbReference type="NCBI Taxonomy" id="595496"/>
    <lineage>
        <taxon>Bacteria</taxon>
        <taxon>Pseudomonadati</taxon>
        <taxon>Pseudomonadota</taxon>
        <taxon>Gammaproteobacteria</taxon>
        <taxon>Enterobacterales</taxon>
        <taxon>Enterobacteriaceae</taxon>
        <taxon>Escherichia</taxon>
    </lineage>
</organism>
<protein>
    <recommendedName>
        <fullName evidence="1">Universal stress protein B</fullName>
    </recommendedName>
</protein>
<name>USPB_ECOBW</name>
<proteinExistence type="inferred from homology"/>
<gene>
    <name evidence="1" type="primary">uspB</name>
    <name type="ordered locus">BWG_3183</name>
</gene>
<keyword id="KW-0997">Cell inner membrane</keyword>
<keyword id="KW-1003">Cell membrane</keyword>
<keyword id="KW-0472">Membrane</keyword>
<keyword id="KW-0812">Transmembrane</keyword>
<keyword id="KW-1133">Transmembrane helix</keyword>
<comment type="subcellular location">
    <subcellularLocation>
        <location evidence="1">Cell inner membrane</location>
        <topology evidence="1">Multi-pass membrane protein</topology>
    </subcellularLocation>
</comment>
<comment type="similarity">
    <text evidence="1">Belongs to the universal stress protein B family.</text>
</comment>
<evidence type="ECO:0000255" key="1">
    <source>
        <dbReference type="HAMAP-Rule" id="MF_01088"/>
    </source>
</evidence>